<sequence length="89" mass="9263">MGEVAATMKIMPEGVDTDLDDLKIRLEAVLPEGASIFGSEIEPVAFGLKALKLVVLVGDLEGGTEPVEEAFAAVPGVESVQVTELGRPV</sequence>
<dbReference type="EMBL" id="CP000300">
    <property type="protein sequence ID" value="ABE52237.1"/>
    <property type="molecule type" value="Genomic_DNA"/>
</dbReference>
<dbReference type="RefSeq" id="WP_011499382.1">
    <property type="nucleotide sequence ID" value="NC_007955.1"/>
</dbReference>
<dbReference type="SMR" id="Q12WD9"/>
<dbReference type="STRING" id="259564.Mbur_1319"/>
<dbReference type="GeneID" id="3998607"/>
<dbReference type="KEGG" id="mbu:Mbur_1319"/>
<dbReference type="HOGENOM" id="CLU_165896_0_0_2"/>
<dbReference type="OrthoDB" id="84643at2157"/>
<dbReference type="Proteomes" id="UP000001979">
    <property type="component" value="Chromosome"/>
</dbReference>
<dbReference type="GO" id="GO:0003746">
    <property type="term" value="F:translation elongation factor activity"/>
    <property type="evidence" value="ECO:0007669"/>
    <property type="project" value="UniProtKB-UniRule"/>
</dbReference>
<dbReference type="CDD" id="cd00292">
    <property type="entry name" value="EF1B"/>
    <property type="match status" value="1"/>
</dbReference>
<dbReference type="Gene3D" id="3.30.70.60">
    <property type="match status" value="1"/>
</dbReference>
<dbReference type="HAMAP" id="MF_00043">
    <property type="entry name" value="EF1_beta"/>
    <property type="match status" value="1"/>
</dbReference>
<dbReference type="InterPro" id="IPR036219">
    <property type="entry name" value="eEF-1beta-like_sf"/>
</dbReference>
<dbReference type="InterPro" id="IPR014038">
    <property type="entry name" value="EF1B_bsu/dsu_GNE"/>
</dbReference>
<dbReference type="InterPro" id="IPR014717">
    <property type="entry name" value="Transl_elong_EF1B/ribsomal_bS6"/>
</dbReference>
<dbReference type="InterPro" id="IPR004542">
    <property type="entry name" value="Transl_elong_EF1B_B_arc"/>
</dbReference>
<dbReference type="NCBIfam" id="TIGR00489">
    <property type="entry name" value="aEF-1_beta"/>
    <property type="match status" value="1"/>
</dbReference>
<dbReference type="NCBIfam" id="NF001670">
    <property type="entry name" value="PRK00435.1"/>
    <property type="match status" value="1"/>
</dbReference>
<dbReference type="PANTHER" id="PTHR39647">
    <property type="entry name" value="ELONGATION FACTOR 1-BETA"/>
    <property type="match status" value="1"/>
</dbReference>
<dbReference type="PANTHER" id="PTHR39647:SF1">
    <property type="entry name" value="ELONGATION FACTOR 1-BETA"/>
    <property type="match status" value="1"/>
</dbReference>
<dbReference type="Pfam" id="PF00736">
    <property type="entry name" value="EF1_GNE"/>
    <property type="match status" value="1"/>
</dbReference>
<dbReference type="PIRSF" id="PIRSF006521">
    <property type="entry name" value="Transl_elong_EF1B_B_arc"/>
    <property type="match status" value="1"/>
</dbReference>
<dbReference type="SMART" id="SM00888">
    <property type="entry name" value="EF1_GNE"/>
    <property type="match status" value="1"/>
</dbReference>
<dbReference type="SUPFAM" id="SSF54984">
    <property type="entry name" value="eEF-1beta-like"/>
    <property type="match status" value="1"/>
</dbReference>
<proteinExistence type="inferred from homology"/>
<protein>
    <recommendedName>
        <fullName evidence="1">Elongation factor 1-beta</fullName>
        <shortName evidence="1">EF-1-beta</shortName>
    </recommendedName>
    <alternativeName>
        <fullName evidence="1">aEF-1beta</fullName>
    </alternativeName>
</protein>
<comment type="function">
    <text evidence="1">Promotes the exchange of GDP for GTP in EF-1-alpha/GDP, thus allowing the regeneration of EF-1-alpha/GTP that could then be used to form the ternary complex EF-1-alpha/GTP/AAtRNA.</text>
</comment>
<comment type="similarity">
    <text evidence="1">Belongs to the EF-1-beta/EF-1-delta family.</text>
</comment>
<organism>
    <name type="scientific">Methanococcoides burtonii (strain DSM 6242 / NBRC 107633 / OCM 468 / ACE-M)</name>
    <dbReference type="NCBI Taxonomy" id="259564"/>
    <lineage>
        <taxon>Archaea</taxon>
        <taxon>Methanobacteriati</taxon>
        <taxon>Methanobacteriota</taxon>
        <taxon>Stenosarchaea group</taxon>
        <taxon>Methanomicrobia</taxon>
        <taxon>Methanosarcinales</taxon>
        <taxon>Methanosarcinaceae</taxon>
        <taxon>Methanococcoides</taxon>
    </lineage>
</organism>
<reference key="1">
    <citation type="journal article" date="2009" name="ISME J.">
        <title>The genome sequence of the psychrophilic archaeon, Methanococcoides burtonii: the role of genome evolution in cold adaptation.</title>
        <authorList>
            <person name="Allen M.A."/>
            <person name="Lauro F.M."/>
            <person name="Williams T.J."/>
            <person name="Burg D."/>
            <person name="Siddiqui K.S."/>
            <person name="De Francisci D."/>
            <person name="Chong K.W."/>
            <person name="Pilak O."/>
            <person name="Chew H.H."/>
            <person name="De Maere M.Z."/>
            <person name="Ting L."/>
            <person name="Katrib M."/>
            <person name="Ng C."/>
            <person name="Sowers K.R."/>
            <person name="Galperin M.Y."/>
            <person name="Anderson I.J."/>
            <person name="Ivanova N."/>
            <person name="Dalin E."/>
            <person name="Martinez M."/>
            <person name="Lapidus A."/>
            <person name="Hauser L."/>
            <person name="Land M."/>
            <person name="Thomas T."/>
            <person name="Cavicchioli R."/>
        </authorList>
    </citation>
    <scope>NUCLEOTIDE SEQUENCE [LARGE SCALE GENOMIC DNA]</scope>
    <source>
        <strain>DSM 6242 / NBRC 107633 / OCM 468 / ACE-M</strain>
    </source>
</reference>
<accession>Q12WD9</accession>
<name>EF1B_METBU</name>
<evidence type="ECO:0000255" key="1">
    <source>
        <dbReference type="HAMAP-Rule" id="MF_00043"/>
    </source>
</evidence>
<keyword id="KW-0251">Elongation factor</keyword>
<keyword id="KW-0648">Protein biosynthesis</keyword>
<gene>
    <name evidence="1" type="primary">ef1b</name>
    <name type="ordered locus">Mbur_1319</name>
</gene>
<feature type="chain" id="PRO_0000366424" description="Elongation factor 1-beta">
    <location>
        <begin position="1"/>
        <end position="89"/>
    </location>
</feature>